<feature type="initiator methionine" description="Removed" evidence="1">
    <location>
        <position position="1"/>
    </location>
</feature>
<feature type="chain" id="PRO_0000199632" description="Profilin">
    <location>
        <begin position="2"/>
        <end position="133"/>
    </location>
</feature>
<evidence type="ECO:0000250" key="1"/>
<evidence type="ECO:0000269" key="2">
    <source>
    </source>
</evidence>
<evidence type="ECO:0000305" key="3"/>
<comment type="function">
    <text evidence="1">Binds to actin and affects the structure of the cytoskeleton. At high concentrations, profilin prevents the polymerization of actin, whereas it enhances it at low concentrations. By binding to PIP2, it inhibits the formation of IP3 and DG (By similarity).</text>
</comment>
<comment type="subunit">
    <text>Occurs in many kinds of cells as a complex with monomeric actin in a 1:1 ratio.</text>
</comment>
<comment type="subcellular location">
    <subcellularLocation>
        <location evidence="1">Cytoplasm</location>
        <location evidence="1">Cytoskeleton</location>
    </subcellularLocation>
</comment>
<comment type="allergen">
    <text evidence="2">Causes an allergic reaction in human.</text>
</comment>
<comment type="similarity">
    <text evidence="3">Belongs to the profilin family.</text>
</comment>
<sequence length="133" mass="14286">MSWQAYVDEHLMCDIEGTGQHLTSAAILGLDGTVWAQSAKFPQFKPEEMKGIIKEFDEAGTLAPTGMFIAGAKYMVLQGEPGAVIRGKKGAGGICIKKTGQAMIMGIYDEPVAPGQCNMVVERLGDYLLEQGM</sequence>
<reference key="1">
    <citation type="journal article" date="1998" name="Mol. Immunol.">
        <title>Cloning and immunological characterization of the allergen Hel a 2 (profilin) from sunflower pollen.</title>
        <authorList>
            <person name="Asturias J.A."/>
            <person name="Arilla M.C."/>
            <person name="Gomez-Bayon N."/>
            <person name="Aguirre M."/>
            <person name="Martinez A."/>
            <person name="Palacios R."/>
            <person name="Martinez J."/>
        </authorList>
    </citation>
    <scope>NUCLEOTIDE SEQUENCE [MRNA]</scope>
    <scope>ALLERGEN</scope>
    <source>
        <tissue>Pollen</tissue>
    </source>
</reference>
<protein>
    <recommendedName>
        <fullName>Profilin</fullName>
    </recommendedName>
    <alternativeName>
        <fullName>Pollen allergen Hel a 2</fullName>
    </alternativeName>
    <allergenName>Hel a 2</allergenName>
</protein>
<accession>O81982</accession>
<keyword id="KW-0009">Actin-binding</keyword>
<keyword id="KW-0020">Allergen</keyword>
<keyword id="KW-0963">Cytoplasm</keyword>
<keyword id="KW-0206">Cytoskeleton</keyword>
<proteinExistence type="evidence at protein level"/>
<dbReference type="EMBL" id="Y15210">
    <property type="protein sequence ID" value="CAA75506.1"/>
    <property type="molecule type" value="mRNA"/>
</dbReference>
<dbReference type="PIR" id="T31427">
    <property type="entry name" value="T31427"/>
</dbReference>
<dbReference type="SMR" id="O81982"/>
<dbReference type="Allergome" id="3307">
    <property type="allergen name" value="Hel a 2.0101"/>
</dbReference>
<dbReference type="Allergome" id="377">
    <property type="allergen name" value="Hel a 2"/>
</dbReference>
<dbReference type="GO" id="GO:0005737">
    <property type="term" value="C:cytoplasm"/>
    <property type="evidence" value="ECO:0007669"/>
    <property type="project" value="UniProtKB-KW"/>
</dbReference>
<dbReference type="GO" id="GO:0005856">
    <property type="term" value="C:cytoskeleton"/>
    <property type="evidence" value="ECO:0007669"/>
    <property type="project" value="UniProtKB-SubCell"/>
</dbReference>
<dbReference type="GO" id="GO:0003779">
    <property type="term" value="F:actin binding"/>
    <property type="evidence" value="ECO:0007669"/>
    <property type="project" value="UniProtKB-KW"/>
</dbReference>
<dbReference type="CDD" id="cd00148">
    <property type="entry name" value="PROF"/>
    <property type="match status" value="1"/>
</dbReference>
<dbReference type="FunFam" id="3.30.450.30:FF:000001">
    <property type="entry name" value="Profilin"/>
    <property type="match status" value="1"/>
</dbReference>
<dbReference type="Gene3D" id="3.30.450.30">
    <property type="entry name" value="Dynein light chain 2a, cytoplasmic"/>
    <property type="match status" value="1"/>
</dbReference>
<dbReference type="InterPro" id="IPR048278">
    <property type="entry name" value="PFN"/>
</dbReference>
<dbReference type="InterPro" id="IPR005455">
    <property type="entry name" value="PFN_euk"/>
</dbReference>
<dbReference type="InterPro" id="IPR036140">
    <property type="entry name" value="PFN_sf"/>
</dbReference>
<dbReference type="InterPro" id="IPR027310">
    <property type="entry name" value="Profilin_CS"/>
</dbReference>
<dbReference type="PANTHER" id="PTHR11604">
    <property type="entry name" value="PROFILIN"/>
    <property type="match status" value="1"/>
</dbReference>
<dbReference type="PANTHER" id="PTHR11604:SF54">
    <property type="entry name" value="PROFILIN"/>
    <property type="match status" value="1"/>
</dbReference>
<dbReference type="Pfam" id="PF00235">
    <property type="entry name" value="Profilin"/>
    <property type="match status" value="1"/>
</dbReference>
<dbReference type="PRINTS" id="PR00392">
    <property type="entry name" value="PROFILIN"/>
</dbReference>
<dbReference type="PRINTS" id="PR01640">
    <property type="entry name" value="PROFILINPLNT"/>
</dbReference>
<dbReference type="SMART" id="SM00392">
    <property type="entry name" value="PROF"/>
    <property type="match status" value="1"/>
</dbReference>
<dbReference type="SUPFAM" id="SSF55770">
    <property type="entry name" value="Profilin (actin-binding protein)"/>
    <property type="match status" value="1"/>
</dbReference>
<dbReference type="PROSITE" id="PS00414">
    <property type="entry name" value="PROFILIN"/>
    <property type="match status" value="1"/>
</dbReference>
<organism>
    <name type="scientific">Helianthus annuus</name>
    <name type="common">Common sunflower</name>
    <dbReference type="NCBI Taxonomy" id="4232"/>
    <lineage>
        <taxon>Eukaryota</taxon>
        <taxon>Viridiplantae</taxon>
        <taxon>Streptophyta</taxon>
        <taxon>Embryophyta</taxon>
        <taxon>Tracheophyta</taxon>
        <taxon>Spermatophyta</taxon>
        <taxon>Magnoliopsida</taxon>
        <taxon>eudicotyledons</taxon>
        <taxon>Gunneridae</taxon>
        <taxon>Pentapetalae</taxon>
        <taxon>asterids</taxon>
        <taxon>campanulids</taxon>
        <taxon>Asterales</taxon>
        <taxon>Asteraceae</taxon>
        <taxon>Asteroideae</taxon>
        <taxon>Heliantheae alliance</taxon>
        <taxon>Heliantheae</taxon>
        <taxon>Helianthus</taxon>
    </lineage>
</organism>
<name>PROF_HELAN</name>